<reference key="1">
    <citation type="journal article" date="2003" name="DNA Res.">
        <title>Complete genome structure of Gloeobacter violaceus PCC 7421, a cyanobacterium that lacks thylakoids.</title>
        <authorList>
            <person name="Nakamura Y."/>
            <person name="Kaneko T."/>
            <person name="Sato S."/>
            <person name="Mimuro M."/>
            <person name="Miyashita H."/>
            <person name="Tsuchiya T."/>
            <person name="Sasamoto S."/>
            <person name="Watanabe A."/>
            <person name="Kawashima K."/>
            <person name="Kishida Y."/>
            <person name="Kiyokawa C."/>
            <person name="Kohara M."/>
            <person name="Matsumoto M."/>
            <person name="Matsuno A."/>
            <person name="Nakazaki N."/>
            <person name="Shimpo S."/>
            <person name="Takeuchi C."/>
            <person name="Yamada M."/>
            <person name="Tabata S."/>
        </authorList>
    </citation>
    <scope>NUCLEOTIDE SEQUENCE [LARGE SCALE GENOMIC DNA]</scope>
    <source>
        <strain>ATCC 29082 / PCC 7421</strain>
    </source>
</reference>
<keyword id="KW-0413">Isomerase</keyword>
<keyword id="KW-1185">Reference proteome</keyword>
<name>RPIA_GLOVI</name>
<proteinExistence type="inferred from homology"/>
<gene>
    <name evidence="1" type="primary">rpiA</name>
    <name type="ordered locus">gll0030</name>
</gene>
<comment type="function">
    <text evidence="1">Catalyzes the reversible conversion of ribose-5-phosphate to ribulose 5-phosphate.</text>
</comment>
<comment type="catalytic activity">
    <reaction evidence="1">
        <text>aldehydo-D-ribose 5-phosphate = D-ribulose 5-phosphate</text>
        <dbReference type="Rhea" id="RHEA:14657"/>
        <dbReference type="ChEBI" id="CHEBI:58121"/>
        <dbReference type="ChEBI" id="CHEBI:58273"/>
        <dbReference type="EC" id="5.3.1.6"/>
    </reaction>
</comment>
<comment type="pathway">
    <text evidence="1">Carbohydrate degradation; pentose phosphate pathway; D-ribose 5-phosphate from D-ribulose 5-phosphate (non-oxidative stage): step 1/1.</text>
</comment>
<comment type="subunit">
    <text evidence="1">Homodimer.</text>
</comment>
<comment type="similarity">
    <text evidence="1">Belongs to the ribose 5-phosphate isomerase family.</text>
</comment>
<sequence length="230" mass="23868">MDLDILKQTAARRAVELVEDGMVVGLGTGSTAAFAVSVLAERVRLGLRVVGIPTSERTARQAEAEGIVLGTLAEQSRVDLTIDGADEVALGELALIKGLGGALLREKIVAAASERLIIIVDATKLVEQLGSHGPLPVEVAPFGWQATARALERLGAEVNLRAQHGQAFLTDGGHYILDCRFGPIARPAELEAAIDRIPGVVESGLFVGMASAVIVADEGGIEVLTPSAAP</sequence>
<feature type="chain" id="PRO_0000158420" description="Ribose-5-phosphate isomerase A">
    <location>
        <begin position="1"/>
        <end position="230"/>
    </location>
</feature>
<feature type="active site" description="Proton acceptor" evidence="1">
    <location>
        <position position="106"/>
    </location>
</feature>
<feature type="binding site" evidence="1">
    <location>
        <begin position="28"/>
        <end position="31"/>
    </location>
    <ligand>
        <name>substrate</name>
    </ligand>
</feature>
<feature type="binding site" evidence="1">
    <location>
        <begin position="83"/>
        <end position="86"/>
    </location>
    <ligand>
        <name>substrate</name>
    </ligand>
</feature>
<feature type="binding site" evidence="1">
    <location>
        <begin position="97"/>
        <end position="100"/>
    </location>
    <ligand>
        <name>substrate</name>
    </ligand>
</feature>
<feature type="binding site" evidence="1">
    <location>
        <position position="124"/>
    </location>
    <ligand>
        <name>substrate</name>
    </ligand>
</feature>
<dbReference type="EC" id="5.3.1.6" evidence="1"/>
<dbReference type="EMBL" id="BA000045">
    <property type="protein sequence ID" value="BAC87971.1"/>
    <property type="molecule type" value="Genomic_DNA"/>
</dbReference>
<dbReference type="RefSeq" id="NP_922976.1">
    <property type="nucleotide sequence ID" value="NC_005125.1"/>
</dbReference>
<dbReference type="RefSeq" id="WP_011140034.1">
    <property type="nucleotide sequence ID" value="NC_005125.1"/>
</dbReference>
<dbReference type="SMR" id="Q7NPM5"/>
<dbReference type="STRING" id="251221.gene:10757499"/>
<dbReference type="EnsemblBacteria" id="BAC87971">
    <property type="protein sequence ID" value="BAC87971"/>
    <property type="gene ID" value="BAC87971"/>
</dbReference>
<dbReference type="KEGG" id="gvi:gll0030"/>
<dbReference type="PATRIC" id="fig|251221.4.peg.31"/>
<dbReference type="eggNOG" id="COG0120">
    <property type="taxonomic scope" value="Bacteria"/>
</dbReference>
<dbReference type="HOGENOM" id="CLU_056590_1_0_3"/>
<dbReference type="InParanoid" id="Q7NPM5"/>
<dbReference type="OrthoDB" id="5870696at2"/>
<dbReference type="PhylomeDB" id="Q7NPM5"/>
<dbReference type="UniPathway" id="UPA00115">
    <property type="reaction ID" value="UER00412"/>
</dbReference>
<dbReference type="Proteomes" id="UP000000557">
    <property type="component" value="Chromosome"/>
</dbReference>
<dbReference type="GO" id="GO:0004751">
    <property type="term" value="F:ribose-5-phosphate isomerase activity"/>
    <property type="evidence" value="ECO:0007669"/>
    <property type="project" value="UniProtKB-UniRule"/>
</dbReference>
<dbReference type="GO" id="GO:0009052">
    <property type="term" value="P:pentose-phosphate shunt, non-oxidative branch"/>
    <property type="evidence" value="ECO:0007669"/>
    <property type="project" value="UniProtKB-UniRule"/>
</dbReference>
<dbReference type="CDD" id="cd01398">
    <property type="entry name" value="RPI_A"/>
    <property type="match status" value="1"/>
</dbReference>
<dbReference type="FunFam" id="3.40.50.1360:FF:000001">
    <property type="entry name" value="Ribose-5-phosphate isomerase A"/>
    <property type="match status" value="1"/>
</dbReference>
<dbReference type="Gene3D" id="3.30.70.260">
    <property type="match status" value="1"/>
</dbReference>
<dbReference type="Gene3D" id="3.40.50.1360">
    <property type="match status" value="1"/>
</dbReference>
<dbReference type="HAMAP" id="MF_00170">
    <property type="entry name" value="Rib_5P_isom_A"/>
    <property type="match status" value="1"/>
</dbReference>
<dbReference type="InterPro" id="IPR037171">
    <property type="entry name" value="NagB/RpiA_transferase-like"/>
</dbReference>
<dbReference type="InterPro" id="IPR050262">
    <property type="entry name" value="Ribose-5P_isomerase"/>
</dbReference>
<dbReference type="InterPro" id="IPR020672">
    <property type="entry name" value="Ribose5P_isomerase_typA_subgr"/>
</dbReference>
<dbReference type="InterPro" id="IPR004788">
    <property type="entry name" value="Ribose5P_isomerase_type_A"/>
</dbReference>
<dbReference type="NCBIfam" id="NF001924">
    <property type="entry name" value="PRK00702.1"/>
    <property type="match status" value="1"/>
</dbReference>
<dbReference type="NCBIfam" id="TIGR00021">
    <property type="entry name" value="rpiA"/>
    <property type="match status" value="1"/>
</dbReference>
<dbReference type="PANTHER" id="PTHR43748">
    <property type="entry name" value="RIBOSE-5-PHOSPHATE ISOMERASE 3, CHLOROPLASTIC-RELATED"/>
    <property type="match status" value="1"/>
</dbReference>
<dbReference type="PANTHER" id="PTHR43748:SF3">
    <property type="entry name" value="RIBOSE-5-PHOSPHATE ISOMERASE 3, CHLOROPLASTIC-RELATED"/>
    <property type="match status" value="1"/>
</dbReference>
<dbReference type="Pfam" id="PF06026">
    <property type="entry name" value="Rib_5-P_isom_A"/>
    <property type="match status" value="1"/>
</dbReference>
<dbReference type="SUPFAM" id="SSF75445">
    <property type="entry name" value="D-ribose-5-phosphate isomerase (RpiA), lid domain"/>
    <property type="match status" value="1"/>
</dbReference>
<dbReference type="SUPFAM" id="SSF100950">
    <property type="entry name" value="NagB/RpiA/CoA transferase-like"/>
    <property type="match status" value="1"/>
</dbReference>
<organism>
    <name type="scientific">Gloeobacter violaceus (strain ATCC 29082 / PCC 7421)</name>
    <dbReference type="NCBI Taxonomy" id="251221"/>
    <lineage>
        <taxon>Bacteria</taxon>
        <taxon>Bacillati</taxon>
        <taxon>Cyanobacteriota</taxon>
        <taxon>Cyanophyceae</taxon>
        <taxon>Gloeobacterales</taxon>
        <taxon>Gloeobacteraceae</taxon>
        <taxon>Gloeobacter</taxon>
    </lineage>
</organism>
<evidence type="ECO:0000255" key="1">
    <source>
        <dbReference type="HAMAP-Rule" id="MF_00170"/>
    </source>
</evidence>
<accession>Q7NPM5</accession>
<protein>
    <recommendedName>
        <fullName evidence="1">Ribose-5-phosphate isomerase A</fullName>
        <ecNumber evidence="1">5.3.1.6</ecNumber>
    </recommendedName>
    <alternativeName>
        <fullName evidence="1">Phosphoriboisomerase A</fullName>
        <shortName evidence="1">PRI</shortName>
    </alternativeName>
</protein>